<name>ATPF_POLAQ</name>
<sequence length="156" mass="17189">MNLNATLFAQMIVFFVLWWVVARFVWPPLVKALDERSSKIADGLAAAERGKEALALASNEAEQELTKARQEGVQRVAEAEKRAQMSADEIRANAQAEAARIITQAKQDADQQVTSAREVLRAEVAVLAVKGAEQILRREVDAKAHGQLLDQLKAEL</sequence>
<dbReference type="EMBL" id="CP000655">
    <property type="protein sequence ID" value="ABP33244.1"/>
    <property type="molecule type" value="Genomic_DNA"/>
</dbReference>
<dbReference type="RefSeq" id="WP_011901870.1">
    <property type="nucleotide sequence ID" value="NC_009379.1"/>
</dbReference>
<dbReference type="SMR" id="A4SUT0"/>
<dbReference type="GeneID" id="31480358"/>
<dbReference type="KEGG" id="pnu:Pnuc_0022"/>
<dbReference type="eggNOG" id="COG0711">
    <property type="taxonomic scope" value="Bacteria"/>
</dbReference>
<dbReference type="HOGENOM" id="CLU_079215_4_5_4"/>
<dbReference type="Proteomes" id="UP000000231">
    <property type="component" value="Chromosome"/>
</dbReference>
<dbReference type="GO" id="GO:0005886">
    <property type="term" value="C:plasma membrane"/>
    <property type="evidence" value="ECO:0007669"/>
    <property type="project" value="UniProtKB-SubCell"/>
</dbReference>
<dbReference type="GO" id="GO:0045259">
    <property type="term" value="C:proton-transporting ATP synthase complex"/>
    <property type="evidence" value="ECO:0007669"/>
    <property type="project" value="UniProtKB-KW"/>
</dbReference>
<dbReference type="GO" id="GO:0046933">
    <property type="term" value="F:proton-transporting ATP synthase activity, rotational mechanism"/>
    <property type="evidence" value="ECO:0007669"/>
    <property type="project" value="UniProtKB-UniRule"/>
</dbReference>
<dbReference type="GO" id="GO:0046961">
    <property type="term" value="F:proton-transporting ATPase activity, rotational mechanism"/>
    <property type="evidence" value="ECO:0007669"/>
    <property type="project" value="TreeGrafter"/>
</dbReference>
<dbReference type="CDD" id="cd06503">
    <property type="entry name" value="ATP-synt_Fo_b"/>
    <property type="match status" value="1"/>
</dbReference>
<dbReference type="Gene3D" id="6.10.250.1580">
    <property type="match status" value="1"/>
</dbReference>
<dbReference type="HAMAP" id="MF_01398">
    <property type="entry name" value="ATP_synth_b_bprime"/>
    <property type="match status" value="1"/>
</dbReference>
<dbReference type="InterPro" id="IPR028987">
    <property type="entry name" value="ATP_synth_B-like_membr_sf"/>
</dbReference>
<dbReference type="InterPro" id="IPR002146">
    <property type="entry name" value="ATP_synth_b/b'su_bac/chlpt"/>
</dbReference>
<dbReference type="InterPro" id="IPR005864">
    <property type="entry name" value="ATP_synth_F0_bsu_bac"/>
</dbReference>
<dbReference type="InterPro" id="IPR050059">
    <property type="entry name" value="ATP_synthase_B_chain"/>
</dbReference>
<dbReference type="NCBIfam" id="TIGR01144">
    <property type="entry name" value="ATP_synt_b"/>
    <property type="match status" value="1"/>
</dbReference>
<dbReference type="NCBIfam" id="NF004411">
    <property type="entry name" value="PRK05759.1-2"/>
    <property type="match status" value="1"/>
</dbReference>
<dbReference type="PANTHER" id="PTHR33445:SF1">
    <property type="entry name" value="ATP SYNTHASE SUBUNIT B"/>
    <property type="match status" value="1"/>
</dbReference>
<dbReference type="PANTHER" id="PTHR33445">
    <property type="entry name" value="ATP SYNTHASE SUBUNIT B', CHLOROPLASTIC"/>
    <property type="match status" value="1"/>
</dbReference>
<dbReference type="Pfam" id="PF00430">
    <property type="entry name" value="ATP-synt_B"/>
    <property type="match status" value="1"/>
</dbReference>
<dbReference type="SUPFAM" id="SSF81573">
    <property type="entry name" value="F1F0 ATP synthase subunit B, membrane domain"/>
    <property type="match status" value="1"/>
</dbReference>
<feature type="chain" id="PRO_0000368661" description="ATP synthase subunit b">
    <location>
        <begin position="1"/>
        <end position="156"/>
    </location>
</feature>
<feature type="transmembrane region" description="Helical" evidence="1">
    <location>
        <begin position="7"/>
        <end position="27"/>
    </location>
</feature>
<protein>
    <recommendedName>
        <fullName evidence="1">ATP synthase subunit b</fullName>
    </recommendedName>
    <alternativeName>
        <fullName evidence="1">ATP synthase F(0) sector subunit b</fullName>
    </alternativeName>
    <alternativeName>
        <fullName evidence="1">ATPase subunit I</fullName>
    </alternativeName>
    <alternativeName>
        <fullName evidence="1">F-type ATPase subunit b</fullName>
        <shortName evidence="1">F-ATPase subunit b</shortName>
    </alternativeName>
</protein>
<keyword id="KW-0066">ATP synthesis</keyword>
<keyword id="KW-1003">Cell membrane</keyword>
<keyword id="KW-0138">CF(0)</keyword>
<keyword id="KW-0375">Hydrogen ion transport</keyword>
<keyword id="KW-0406">Ion transport</keyword>
<keyword id="KW-0472">Membrane</keyword>
<keyword id="KW-1185">Reference proteome</keyword>
<keyword id="KW-0812">Transmembrane</keyword>
<keyword id="KW-1133">Transmembrane helix</keyword>
<keyword id="KW-0813">Transport</keyword>
<organism>
    <name type="scientific">Polynucleobacter asymbioticus (strain DSM 18221 / CIP 109841 / QLW-P1DMWA-1)</name>
    <name type="common">Polynucleobacter necessarius subsp. asymbioticus</name>
    <dbReference type="NCBI Taxonomy" id="312153"/>
    <lineage>
        <taxon>Bacteria</taxon>
        <taxon>Pseudomonadati</taxon>
        <taxon>Pseudomonadota</taxon>
        <taxon>Betaproteobacteria</taxon>
        <taxon>Burkholderiales</taxon>
        <taxon>Burkholderiaceae</taxon>
        <taxon>Polynucleobacter</taxon>
    </lineage>
</organism>
<proteinExistence type="inferred from homology"/>
<evidence type="ECO:0000255" key="1">
    <source>
        <dbReference type="HAMAP-Rule" id="MF_01398"/>
    </source>
</evidence>
<comment type="function">
    <text evidence="1">F(1)F(0) ATP synthase produces ATP from ADP in the presence of a proton or sodium gradient. F-type ATPases consist of two structural domains, F(1) containing the extramembraneous catalytic core and F(0) containing the membrane proton channel, linked together by a central stalk and a peripheral stalk. During catalysis, ATP synthesis in the catalytic domain of F(1) is coupled via a rotary mechanism of the central stalk subunits to proton translocation.</text>
</comment>
<comment type="function">
    <text evidence="1">Component of the F(0) channel, it forms part of the peripheral stalk, linking F(1) to F(0).</text>
</comment>
<comment type="subunit">
    <text evidence="1">F-type ATPases have 2 components, F(1) - the catalytic core - and F(0) - the membrane proton channel. F(1) has five subunits: alpha(3), beta(3), gamma(1), delta(1), epsilon(1). F(0) has three main subunits: a(1), b(2) and c(10-14). The alpha and beta chains form an alternating ring which encloses part of the gamma chain. F(1) is attached to F(0) by a central stalk formed by the gamma and epsilon chains, while a peripheral stalk is formed by the delta and b chains.</text>
</comment>
<comment type="subcellular location">
    <subcellularLocation>
        <location evidence="1">Cell membrane</location>
        <topology evidence="1">Single-pass membrane protein</topology>
    </subcellularLocation>
</comment>
<comment type="similarity">
    <text evidence="1">Belongs to the ATPase B chain family.</text>
</comment>
<gene>
    <name evidence="1" type="primary">atpF</name>
    <name type="ordered locus">Pnuc_0022</name>
</gene>
<reference key="1">
    <citation type="journal article" date="2012" name="Stand. Genomic Sci.">
        <title>Complete genome sequence of Polynucleobacter necessarius subsp. asymbioticus type strain (QLW-P1DMWA-1(T)).</title>
        <authorList>
            <person name="Meincke L."/>
            <person name="Copeland A."/>
            <person name="Lapidus A."/>
            <person name="Lucas S."/>
            <person name="Berry K.W."/>
            <person name="Del Rio T.G."/>
            <person name="Hammon N."/>
            <person name="Dalin E."/>
            <person name="Tice H."/>
            <person name="Pitluck S."/>
            <person name="Richardson P."/>
            <person name="Bruce D."/>
            <person name="Goodwin L."/>
            <person name="Han C."/>
            <person name="Tapia R."/>
            <person name="Detter J.C."/>
            <person name="Schmutz J."/>
            <person name="Brettin T."/>
            <person name="Larimer F."/>
            <person name="Land M."/>
            <person name="Hauser L."/>
            <person name="Kyrpides N.C."/>
            <person name="Ivanova N."/>
            <person name="Goker M."/>
            <person name="Woyke T."/>
            <person name="Wu Q.L."/>
            <person name="Pockl M."/>
            <person name="Hahn M.W."/>
            <person name="Klenk H.P."/>
        </authorList>
    </citation>
    <scope>NUCLEOTIDE SEQUENCE [LARGE SCALE GENOMIC DNA]</scope>
    <source>
        <strain>DSM 18221 / CIP 109841 / QLW-P1DMWA-1</strain>
    </source>
</reference>
<accession>A4SUT0</accession>